<organismHost>
    <name type="scientific">Solanum tuberosum</name>
    <name type="common">Potato</name>
    <dbReference type="NCBI Taxonomy" id="4113"/>
</organismHost>
<organism>
    <name type="scientific">Potato virus M (strain Russian)</name>
    <name type="common">PVM</name>
    <dbReference type="NCBI Taxonomy" id="12168"/>
    <lineage>
        <taxon>Viruses</taxon>
        <taxon>Riboviria</taxon>
        <taxon>Orthornavirae</taxon>
        <taxon>Kitrinoviricota</taxon>
        <taxon>Alsuviricetes</taxon>
        <taxon>Tymovirales</taxon>
        <taxon>Betaflexiviridae</taxon>
        <taxon>Quinvirinae</taxon>
        <taxon>Carlavirus</taxon>
        <taxon>Potato virus M</taxon>
    </lineage>
</organism>
<keyword id="KW-1038">Host endoplasmic reticulum</keyword>
<keyword id="KW-1043">Host membrane</keyword>
<keyword id="KW-0472">Membrane</keyword>
<keyword id="KW-1185">Reference proteome</keyword>
<keyword id="KW-0812">Transmembrane</keyword>
<keyword id="KW-1133">Transmembrane helix</keyword>
<keyword id="KW-0813">Transport</keyword>
<keyword id="KW-0916">Viral movement protein</keyword>
<protein>
    <recommendedName>
        <fullName>Movement protein TGBp3</fullName>
    </recommendedName>
    <alternativeName>
        <fullName>7 kDa protein</fullName>
    </alternativeName>
    <alternativeName>
        <fullName>Triple gene block 3 protein</fullName>
        <shortName>TGBp3</shortName>
    </alternativeName>
</protein>
<proteinExistence type="inferred from homology"/>
<accession>P17528</accession>
<dbReference type="EMBL" id="D14449">
    <property type="protein sequence ID" value="BAA03342.1"/>
    <property type="molecule type" value="Genomic_RNA"/>
</dbReference>
<dbReference type="PIR" id="PN0004">
    <property type="entry name" value="WMVYP3"/>
</dbReference>
<dbReference type="RefSeq" id="NP_056770.1">
    <property type="nucleotide sequence ID" value="NC_001361.2"/>
</dbReference>
<dbReference type="KEGG" id="vg:1493992"/>
<dbReference type="Proteomes" id="UP000000677">
    <property type="component" value="Segment"/>
</dbReference>
<dbReference type="GO" id="GO:0044167">
    <property type="term" value="C:host cell endoplasmic reticulum membrane"/>
    <property type="evidence" value="ECO:0007669"/>
    <property type="project" value="UniProtKB-SubCell"/>
</dbReference>
<dbReference type="GO" id="GO:0016020">
    <property type="term" value="C:membrane"/>
    <property type="evidence" value="ECO:0007669"/>
    <property type="project" value="UniProtKB-KW"/>
</dbReference>
<dbReference type="GO" id="GO:0046740">
    <property type="term" value="P:transport of virus in host, cell to cell"/>
    <property type="evidence" value="ECO:0007669"/>
    <property type="project" value="UniProtKB-KW"/>
</dbReference>
<dbReference type="InterPro" id="IPR003411">
    <property type="entry name" value="TGBp3"/>
</dbReference>
<dbReference type="Pfam" id="PF02495">
    <property type="entry name" value="TGBp3"/>
    <property type="match status" value="1"/>
</dbReference>
<comment type="function">
    <text evidence="1">Plays a role in viral cell-to-cell propagation, by facilitating genome transport to neighboring plant cells through plasmosdesmata. May induce the formation of granular vesicles derived from the Endoplasmic reticulum, which align on actin filaments (By similarity).</text>
</comment>
<comment type="subcellular location">
    <subcellularLocation>
        <location evidence="1">Host endoplasmic reticulum membrane</location>
    </subcellularLocation>
</comment>
<comment type="miscellaneous">
    <text>TGBp1, TGBp2 and TGBp3 seem to act together for cell-to-cell propagation. TGBp1 is the main movement protein that physically cross the plasmodesma with the viral genome. TGBp2 and TGBp3 would facilitate TGBp1 function.</text>
</comment>
<comment type="similarity">
    <text evidence="3">Belongs to the Tymovirales TGBp3 protein family.</text>
</comment>
<sequence length="63" mass="6747">MIVYVLVGLSAFCIVLYLISQGQSDCVVLITGESVRVQGCRIDGEFGSVLSKLKPFGCGSFRS</sequence>
<feature type="chain" id="PRO_0000222616" description="Movement protein TGBp3">
    <location>
        <begin position="1"/>
        <end position="63"/>
    </location>
</feature>
<feature type="transmembrane region" description="Helical" evidence="2">
    <location>
        <begin position="1"/>
        <end position="21"/>
    </location>
</feature>
<feature type="topological domain" description="Cytoplasmic" evidence="2">
    <location>
        <begin position="22"/>
        <end position="63"/>
    </location>
</feature>
<evidence type="ECO:0000250" key="1"/>
<evidence type="ECO:0000255" key="2"/>
<evidence type="ECO:0000305" key="3"/>
<gene>
    <name type="ORF">ORF4</name>
</gene>
<reference key="1">
    <citation type="journal article" date="1989" name="J. Gen. Virol.">
        <title>Partial nucleotide sequence of potato virus M RNA shows similarities to protexviruses in gene arrangement and the encoded amino acid sequences.</title>
        <authorList>
            <person name="Rupasov V.V."/>
            <person name="Morozov S.Y."/>
            <person name="Kanyuka K.V."/>
            <person name="Zavriev S.K."/>
        </authorList>
    </citation>
    <scope>NUCLEOTIDE SEQUENCE [GENOMIC RNA]</scope>
</reference>
<reference key="2">
    <citation type="journal article" date="1991" name="J. Gen. Virol.">
        <title>The genome organization of potato virus M RNA.</title>
        <authorList>
            <person name="Zavriev S.K."/>
            <person name="Kanyuka K.V."/>
            <person name="Levay K.E."/>
        </authorList>
    </citation>
    <scope>NUCLEOTIDE SEQUENCE [GENOMIC RNA]</scope>
</reference>
<reference key="3">
    <citation type="journal article" date="1991" name="Mol. Biol. (Mosk.)">
        <title>Complete nucleotide sequence of genomic RNA of the potato M-virus.</title>
        <authorList>
            <person name="Zavriev S.K."/>
            <person name="Kaniuka K.V."/>
            <person name="Levai K.E."/>
        </authorList>
    </citation>
    <scope>NUCLEOTIDE SEQUENCE [GENOMIC RNA]</scope>
</reference>
<name>TGB3_PVMR</name>